<evidence type="ECO:0000255" key="1">
    <source>
        <dbReference type="HAMAP-Rule" id="MF_00337"/>
    </source>
</evidence>
<name>EX7S_COXBR</name>
<comment type="function">
    <text evidence="1">Bidirectionally degrades single-stranded DNA into large acid-insoluble oligonucleotides, which are then degraded further into small acid-soluble oligonucleotides.</text>
</comment>
<comment type="catalytic activity">
    <reaction evidence="1">
        <text>Exonucleolytic cleavage in either 5'- to 3'- or 3'- to 5'-direction to yield nucleoside 5'-phosphates.</text>
        <dbReference type="EC" id="3.1.11.6"/>
    </reaction>
</comment>
<comment type="subunit">
    <text evidence="1">Heterooligomer composed of large and small subunits.</text>
</comment>
<comment type="subcellular location">
    <subcellularLocation>
        <location evidence="1">Cytoplasm</location>
    </subcellularLocation>
</comment>
<comment type="similarity">
    <text evidence="1">Belongs to the XseB family.</text>
</comment>
<feature type="chain" id="PRO_1000079283" description="Exodeoxyribonuclease 7 small subunit">
    <location>
        <begin position="1"/>
        <end position="82"/>
    </location>
</feature>
<gene>
    <name evidence="1" type="primary">xseB</name>
    <name type="ordered locus">COXBURSA331_A0574</name>
</gene>
<protein>
    <recommendedName>
        <fullName evidence="1">Exodeoxyribonuclease 7 small subunit</fullName>
        <ecNumber evidence="1">3.1.11.6</ecNumber>
    </recommendedName>
    <alternativeName>
        <fullName evidence="1">Exodeoxyribonuclease VII small subunit</fullName>
        <shortName evidence="1">Exonuclease VII small subunit</shortName>
    </alternativeName>
</protein>
<keyword id="KW-0963">Cytoplasm</keyword>
<keyword id="KW-0269">Exonuclease</keyword>
<keyword id="KW-0378">Hydrolase</keyword>
<keyword id="KW-0540">Nuclease</keyword>
<reference key="1">
    <citation type="submission" date="2007-11" db="EMBL/GenBank/DDBJ databases">
        <title>Genome sequencing of phylogenetically and phenotypically diverse Coxiella burnetii isolates.</title>
        <authorList>
            <person name="Seshadri R."/>
            <person name="Samuel J.E."/>
        </authorList>
    </citation>
    <scope>NUCLEOTIDE SEQUENCE [LARGE SCALE GENOMIC DNA]</scope>
    <source>
        <strain>RSA 331 / Henzerling II</strain>
    </source>
</reference>
<sequence length="82" mass="9226">MPRKKTENFNFEASLNELTALVEKLEQGDLTLEESLQNFERGVGLVRSCQQALSDAEQKVKVLINQDGAETLVPFELETKTD</sequence>
<accession>A9NBV6</accession>
<proteinExistence type="inferred from homology"/>
<organism>
    <name type="scientific">Coxiella burnetii (strain RSA 331 / Henzerling II)</name>
    <dbReference type="NCBI Taxonomy" id="360115"/>
    <lineage>
        <taxon>Bacteria</taxon>
        <taxon>Pseudomonadati</taxon>
        <taxon>Pseudomonadota</taxon>
        <taxon>Gammaproteobacteria</taxon>
        <taxon>Legionellales</taxon>
        <taxon>Coxiellaceae</taxon>
        <taxon>Coxiella</taxon>
    </lineage>
</organism>
<dbReference type="EC" id="3.1.11.6" evidence="1"/>
<dbReference type="EMBL" id="CP000890">
    <property type="protein sequence ID" value="ABX78583.1"/>
    <property type="molecule type" value="Genomic_DNA"/>
</dbReference>
<dbReference type="RefSeq" id="WP_005771337.1">
    <property type="nucleotide sequence ID" value="NC_010117.1"/>
</dbReference>
<dbReference type="SMR" id="A9NBV6"/>
<dbReference type="KEGG" id="cbs:COXBURSA331_A0574"/>
<dbReference type="HOGENOM" id="CLU_145918_3_3_6"/>
<dbReference type="GO" id="GO:0005829">
    <property type="term" value="C:cytosol"/>
    <property type="evidence" value="ECO:0007669"/>
    <property type="project" value="TreeGrafter"/>
</dbReference>
<dbReference type="GO" id="GO:0009318">
    <property type="term" value="C:exodeoxyribonuclease VII complex"/>
    <property type="evidence" value="ECO:0007669"/>
    <property type="project" value="InterPro"/>
</dbReference>
<dbReference type="GO" id="GO:0008855">
    <property type="term" value="F:exodeoxyribonuclease VII activity"/>
    <property type="evidence" value="ECO:0007669"/>
    <property type="project" value="UniProtKB-UniRule"/>
</dbReference>
<dbReference type="GO" id="GO:0006308">
    <property type="term" value="P:DNA catabolic process"/>
    <property type="evidence" value="ECO:0007669"/>
    <property type="project" value="UniProtKB-UniRule"/>
</dbReference>
<dbReference type="Gene3D" id="1.10.287.1040">
    <property type="entry name" value="Exonuclease VII, small subunit"/>
    <property type="match status" value="1"/>
</dbReference>
<dbReference type="HAMAP" id="MF_00337">
    <property type="entry name" value="Exonuc_7_S"/>
    <property type="match status" value="1"/>
</dbReference>
<dbReference type="InterPro" id="IPR003761">
    <property type="entry name" value="Exonuc_VII_S"/>
</dbReference>
<dbReference type="InterPro" id="IPR037004">
    <property type="entry name" value="Exonuc_VII_ssu_sf"/>
</dbReference>
<dbReference type="NCBIfam" id="NF002140">
    <property type="entry name" value="PRK00977.1-4"/>
    <property type="match status" value="1"/>
</dbReference>
<dbReference type="NCBIfam" id="TIGR01280">
    <property type="entry name" value="xseB"/>
    <property type="match status" value="1"/>
</dbReference>
<dbReference type="PANTHER" id="PTHR34137">
    <property type="entry name" value="EXODEOXYRIBONUCLEASE 7 SMALL SUBUNIT"/>
    <property type="match status" value="1"/>
</dbReference>
<dbReference type="PANTHER" id="PTHR34137:SF1">
    <property type="entry name" value="EXODEOXYRIBONUCLEASE 7 SMALL SUBUNIT"/>
    <property type="match status" value="1"/>
</dbReference>
<dbReference type="Pfam" id="PF02609">
    <property type="entry name" value="Exonuc_VII_S"/>
    <property type="match status" value="1"/>
</dbReference>
<dbReference type="PIRSF" id="PIRSF006488">
    <property type="entry name" value="Exonuc_VII_S"/>
    <property type="match status" value="1"/>
</dbReference>
<dbReference type="SUPFAM" id="SSF116842">
    <property type="entry name" value="XseB-like"/>
    <property type="match status" value="1"/>
</dbReference>